<sequence>MIEEQRTMSVEGADQQSEKLFHYLKKVAVELDETRARLREYEQRATEPVAVVGIGCRFPGGVDGPDGLWDVVSAGRDVVSEFPTDRGWDVEGLYDPDPDAEGKTYTRWGAFLDDATGFDAGFFGIAPSEVLAMDPQQRLMLEVSWEALEHAGIDPLSLRGSATGVYTGIFAASYGNRDTGGLQGYGLTGTSISVASGRVSYVLGLQGPAVSVDTACSSSLVAIHWAMSSLRSGECDLALAGGVTVMGLPSIFVGFSRQRGLAADGRCKAFAAAADGTGWGEGAGVVVLERLSDARRLGHSVLAVVRGSAVNQDGASNGLTAPNGLAQQRVIQVALANAGLSAADVDVVEAHGTATTLGDPIEAQALLSTYGQGGPAEQPLWVGSIKSNMGHTQAAAGVAGVIKMVQAMRHGVMPATLHVDEPSPRVDWTSGAVSVLTEAREWSVDGRPRRAAVSSFGISGTNAHLILEEAPVPAPAEAPVEASESTGGRGRRWCRG</sequence>
<accession>P96284</accession>
<accession>L0TBC2</accession>
<evidence type="ECO:0000255" key="1">
    <source>
        <dbReference type="PROSITE-ProRule" id="PRU01348"/>
    </source>
</evidence>
<evidence type="ECO:0000256" key="2">
    <source>
        <dbReference type="SAM" id="MobiDB-lite"/>
    </source>
</evidence>
<evidence type="ECO:0000305" key="3"/>
<reference key="1">
    <citation type="journal article" date="1998" name="Nature">
        <title>Deciphering the biology of Mycobacterium tuberculosis from the complete genome sequence.</title>
        <authorList>
            <person name="Cole S.T."/>
            <person name="Brosch R."/>
            <person name="Parkhill J."/>
            <person name="Garnier T."/>
            <person name="Churcher C.M."/>
            <person name="Harris D.E."/>
            <person name="Gordon S.V."/>
            <person name="Eiglmeier K."/>
            <person name="Gas S."/>
            <person name="Barry C.E. III"/>
            <person name="Tekaia F."/>
            <person name="Badcock K."/>
            <person name="Basham D."/>
            <person name="Brown D."/>
            <person name="Chillingworth T."/>
            <person name="Connor R."/>
            <person name="Davies R.M."/>
            <person name="Devlin K."/>
            <person name="Feltwell T."/>
            <person name="Gentles S."/>
            <person name="Hamlin N."/>
            <person name="Holroyd S."/>
            <person name="Hornsby T."/>
            <person name="Jagels K."/>
            <person name="Krogh A."/>
            <person name="McLean J."/>
            <person name="Moule S."/>
            <person name="Murphy L.D."/>
            <person name="Oliver S."/>
            <person name="Osborne J."/>
            <person name="Quail M.A."/>
            <person name="Rajandream M.A."/>
            <person name="Rogers J."/>
            <person name="Rutter S."/>
            <person name="Seeger K."/>
            <person name="Skelton S."/>
            <person name="Squares S."/>
            <person name="Squares R."/>
            <person name="Sulston J.E."/>
            <person name="Taylor K."/>
            <person name="Whitehead S."/>
            <person name="Barrell B.G."/>
        </authorList>
    </citation>
    <scope>NUCLEOTIDE SEQUENCE [LARGE SCALE GENOMIC DNA]</scope>
    <source>
        <strain>ATCC 25618 / H37Rv</strain>
    </source>
</reference>
<reference key="2">
    <citation type="journal article" date="2002" name="J. Biol. Chem.">
        <title>Role of the pks15/1 gene in the biosynthesis of phenolglycolipids in the Mycobacterium tuberculosis complex. Evidence that all strains synthesize glycosylated p-hydroxybenzoic methyl esters and that strains devoid of phenolglycolipids harbor a frameshift mutation in the pks15/1 gene.</title>
        <authorList>
            <person name="Constant P."/>
            <person name="Perez E."/>
            <person name="Malaga W."/>
            <person name="Laneelle M.A."/>
            <person name="Saurel O."/>
            <person name="Daffe M."/>
            <person name="Guilhot C."/>
        </authorList>
    </citation>
    <scope>NATURAL FRAMESHIFT</scope>
    <source>
        <strain>ATCC 25618 / H37Rv</strain>
    </source>
</reference>
<reference key="3">
    <citation type="journal article" date="2011" name="Mol. Cell. Proteomics">
        <title>Proteogenomic analysis of Mycobacterium tuberculosis by high resolution mass spectrometry.</title>
        <authorList>
            <person name="Kelkar D.S."/>
            <person name="Kumar D."/>
            <person name="Kumar P."/>
            <person name="Balakrishnan L."/>
            <person name="Muthusamy B."/>
            <person name="Yadav A.K."/>
            <person name="Shrivastava P."/>
            <person name="Marimuthu A."/>
            <person name="Anand S."/>
            <person name="Sundaram H."/>
            <person name="Kingsbury R."/>
            <person name="Harsha H.C."/>
            <person name="Nair B."/>
            <person name="Prasad T.S."/>
            <person name="Chauhan D.S."/>
            <person name="Katoch K."/>
            <person name="Katoch V.M."/>
            <person name="Kumar P."/>
            <person name="Chaerkady R."/>
            <person name="Ramachandran S."/>
            <person name="Dash D."/>
            <person name="Pandey A."/>
        </authorList>
    </citation>
    <scope>IDENTIFICATION BY MASS SPECTROMETRY [LARGE SCALE ANALYSIS]</scope>
    <source>
        <strain>ATCC 25618 / H37Rv</strain>
    </source>
</reference>
<name>PKS15_MYCTU</name>
<gene>
    <name type="primary">pks15</name>
    <name type="ordered locus">Rv2947c</name>
</gene>
<dbReference type="EMBL" id="AL123456">
    <property type="protein sequence ID" value="CCP45751.1"/>
    <property type="molecule type" value="Genomic_DNA"/>
</dbReference>
<dbReference type="PIR" id="H70668">
    <property type="entry name" value="H70668"/>
</dbReference>
<dbReference type="RefSeq" id="NP_217463.1">
    <property type="nucleotide sequence ID" value="NC_000962.3"/>
</dbReference>
<dbReference type="RefSeq" id="WP_009936729.1">
    <property type="nucleotide sequence ID" value="NC_000962.3"/>
</dbReference>
<dbReference type="SMR" id="P96284"/>
<dbReference type="FunCoup" id="P96284">
    <property type="interactions" value="1"/>
</dbReference>
<dbReference type="STRING" id="83332.Rv2947c"/>
<dbReference type="PaxDb" id="83332-Rv2947c"/>
<dbReference type="DNASU" id="887291"/>
<dbReference type="GeneID" id="887291"/>
<dbReference type="KEGG" id="mtu:Rv2947c"/>
<dbReference type="KEGG" id="mtv:RVBD_2947c"/>
<dbReference type="TubercuList" id="Rv2947c"/>
<dbReference type="eggNOG" id="COG3321">
    <property type="taxonomic scope" value="Bacteria"/>
</dbReference>
<dbReference type="InParanoid" id="P96284"/>
<dbReference type="OrthoDB" id="9778690at2"/>
<dbReference type="PhylomeDB" id="P96284"/>
<dbReference type="BRENDA" id="2.3.1.261">
    <property type="organism ID" value="3445"/>
</dbReference>
<dbReference type="Proteomes" id="UP000001584">
    <property type="component" value="Chromosome"/>
</dbReference>
<dbReference type="GO" id="GO:0005829">
    <property type="term" value="C:cytosol"/>
    <property type="evidence" value="ECO:0007005"/>
    <property type="project" value="MTBBASE"/>
</dbReference>
<dbReference type="GO" id="GO:0016020">
    <property type="term" value="C:membrane"/>
    <property type="evidence" value="ECO:0007669"/>
    <property type="project" value="GOC"/>
</dbReference>
<dbReference type="GO" id="GO:0004315">
    <property type="term" value="F:3-oxoacyl-[acyl-carrier-protein] synthase activity"/>
    <property type="evidence" value="ECO:0007669"/>
    <property type="project" value="InterPro"/>
</dbReference>
<dbReference type="GO" id="GO:0006633">
    <property type="term" value="P:fatty acid biosynthetic process"/>
    <property type="evidence" value="ECO:0007669"/>
    <property type="project" value="InterPro"/>
</dbReference>
<dbReference type="GO" id="GO:0009247">
    <property type="term" value="P:glycolipid biosynthetic process"/>
    <property type="evidence" value="ECO:0000315"/>
    <property type="project" value="MTBBASE"/>
</dbReference>
<dbReference type="CDD" id="cd00833">
    <property type="entry name" value="PKS"/>
    <property type="match status" value="1"/>
</dbReference>
<dbReference type="FunFam" id="3.40.47.10:FF:000019">
    <property type="entry name" value="Polyketide synthase type I"/>
    <property type="match status" value="1"/>
</dbReference>
<dbReference type="Gene3D" id="3.40.47.10">
    <property type="match status" value="1"/>
</dbReference>
<dbReference type="Gene3D" id="6.10.40.10">
    <property type="match status" value="1"/>
</dbReference>
<dbReference type="InterPro" id="IPR018201">
    <property type="entry name" value="Ketoacyl_synth_AS"/>
</dbReference>
<dbReference type="InterPro" id="IPR014031">
    <property type="entry name" value="Ketoacyl_synth_C"/>
</dbReference>
<dbReference type="InterPro" id="IPR014030">
    <property type="entry name" value="Ketoacyl_synth_N"/>
</dbReference>
<dbReference type="InterPro" id="IPR032821">
    <property type="entry name" value="PKS_assoc"/>
</dbReference>
<dbReference type="InterPro" id="IPR020841">
    <property type="entry name" value="PKS_Beta-ketoAc_synthase_dom"/>
</dbReference>
<dbReference type="InterPro" id="IPR050091">
    <property type="entry name" value="PKS_NRPS_Biosynth_Enz"/>
</dbReference>
<dbReference type="InterPro" id="IPR036299">
    <property type="entry name" value="Polyketide_synth_docking_sf"/>
</dbReference>
<dbReference type="InterPro" id="IPR016039">
    <property type="entry name" value="Thiolase-like"/>
</dbReference>
<dbReference type="PANTHER" id="PTHR43775">
    <property type="entry name" value="FATTY ACID SYNTHASE"/>
    <property type="match status" value="1"/>
</dbReference>
<dbReference type="PANTHER" id="PTHR43775:SF51">
    <property type="entry name" value="INACTIVE PHENOLPHTHIOCEROL SYNTHESIS POLYKETIDE SYNTHASE TYPE I PKS1-RELATED"/>
    <property type="match status" value="1"/>
</dbReference>
<dbReference type="Pfam" id="PF16197">
    <property type="entry name" value="KAsynt_C_assoc"/>
    <property type="match status" value="1"/>
</dbReference>
<dbReference type="Pfam" id="PF00109">
    <property type="entry name" value="ketoacyl-synt"/>
    <property type="match status" value="1"/>
</dbReference>
<dbReference type="Pfam" id="PF02801">
    <property type="entry name" value="Ketoacyl-synt_C"/>
    <property type="match status" value="1"/>
</dbReference>
<dbReference type="SMART" id="SM00825">
    <property type="entry name" value="PKS_KS"/>
    <property type="match status" value="1"/>
</dbReference>
<dbReference type="SUPFAM" id="SSF101173">
    <property type="entry name" value="Docking domain B of the erythromycin polyketide synthase (DEBS)"/>
    <property type="match status" value="1"/>
</dbReference>
<dbReference type="SUPFAM" id="SSF53901">
    <property type="entry name" value="Thiolase-like"/>
    <property type="match status" value="1"/>
</dbReference>
<dbReference type="PROSITE" id="PS00606">
    <property type="entry name" value="KS3_1"/>
    <property type="match status" value="1"/>
</dbReference>
<dbReference type="PROSITE" id="PS52004">
    <property type="entry name" value="KS3_2"/>
    <property type="match status" value="1"/>
</dbReference>
<organism>
    <name type="scientific">Mycobacterium tuberculosis (strain ATCC 25618 / H37Rv)</name>
    <dbReference type="NCBI Taxonomy" id="83332"/>
    <lineage>
        <taxon>Bacteria</taxon>
        <taxon>Bacillati</taxon>
        <taxon>Actinomycetota</taxon>
        <taxon>Actinomycetes</taxon>
        <taxon>Mycobacteriales</taxon>
        <taxon>Mycobacteriaceae</taxon>
        <taxon>Mycobacterium</taxon>
        <taxon>Mycobacterium tuberculosis complex</taxon>
    </lineage>
</organism>
<proteinExistence type="evidence at protein level"/>
<comment type="caution">
    <text evidence="3">M.bovis (strains ATCC BAA-935 / AF2122/97 and BCG / Pasteur 1173P2) and M.marinum (strain ATCC BAA-535 / M) have a single fused pks15/1 ORF, but M.tuberculosis (strains ATCC 25618 / H37Rv and CDC 1551 / Oshkosh) have 2 separate ORFs. This is due to the natural deletion of a single base, a guanine, that causes a frameshift and thus the two ORFs, pks15 and pks1, instead of pks15/1. This frameshift led to the inactivation of Pks15/1, which in turn caused the inability of these strains to elongate the putative p-hydroxybenzoic acid precursor and thus to produce phenolphthiocerol derivatives.</text>
</comment>
<keyword id="KW-1185">Reference proteome</keyword>
<keyword id="KW-0808">Transferase</keyword>
<protein>
    <recommendedName>
        <fullName>Putative inactive phenolphthiocerol synthesis polyketide synthase type I Pks15</fullName>
    </recommendedName>
</protein>
<feature type="chain" id="PRO_0000406363" description="Putative inactive phenolphthiocerol synthesis polyketide synthase type I Pks15">
    <location>
        <begin position="1"/>
        <end position="496"/>
    </location>
</feature>
<feature type="domain" description="Ketosynthase family 3 (KS3)" evidence="1">
    <location>
        <begin position="46"/>
        <end position="469"/>
    </location>
</feature>
<feature type="region of interest" description="Disordered" evidence="2">
    <location>
        <begin position="474"/>
        <end position="496"/>
    </location>
</feature>
<feature type="compositionally biased region" description="Low complexity" evidence="2">
    <location>
        <begin position="474"/>
        <end position="485"/>
    </location>
</feature>
<feature type="active site" description="For beta-ketoacyl synthase activity" evidence="1">
    <location>
        <position position="216"/>
    </location>
</feature>
<feature type="active site" description="For beta-ketoacyl synthase activity" evidence="1">
    <location>
        <position position="351"/>
    </location>
</feature>
<feature type="active site" description="For beta-ketoacyl synthase activity" evidence="1">
    <location>
        <position position="391"/>
    </location>
</feature>